<gene>
    <name evidence="3" type="primary">mtrA</name>
    <name type="synonym">yfnA</name>
    <name type="ordered locus">BSU07340</name>
</gene>
<comment type="function">
    <text evidence="2">Involved in import of methylthioribose (MTR) into the cell.</text>
</comment>
<comment type="subcellular location">
    <subcellularLocation>
        <location evidence="4">Cell membrane</location>
        <topology evidence="1">Multi-pass membrane protein</topology>
    </subcellularLocation>
</comment>
<comment type="disruption phenotype">
    <text evidence="2">Disruption of the gene leads to almost full resistance to trifluoromethylthioribose (3FMTR), a toxic analog of MTR.</text>
</comment>
<comment type="similarity">
    <text evidence="4">Belongs to the amino acid-polyamine-organocation (APC) superfamily.</text>
</comment>
<comment type="sequence caution" evidence="4">
    <conflict type="erroneous initiation">
        <sequence resource="EMBL-CDS" id="BAA20110"/>
    </conflict>
</comment>
<keyword id="KW-1003">Cell membrane</keyword>
<keyword id="KW-0472">Membrane</keyword>
<keyword id="KW-1185">Reference proteome</keyword>
<keyword id="KW-0762">Sugar transport</keyword>
<keyword id="KW-0812">Transmembrane</keyword>
<keyword id="KW-1133">Transmembrane helix</keyword>
<keyword id="KW-0813">Transport</keyword>
<name>MTRTR_BACSU</name>
<accession>Q797A7</accession>
<accession>O06479</accession>
<sequence>MSSLFRKKPLETLSAQSKSKSLARTLSAFDLTLLGIGCVIGTGIFVITGTVAATGAGPALIISFILAGLACALAAFCYAEFSSSIPISGSVYSYSYVTLGELLAFLIGWDLMLEYVIALSAVATGWSSYFQSLLAGFNLHIPAALTGAPGSMAGAVFNLPAAVIILLITAIVSRGVKESTRFNNVIVLMKIAIILLFIIVGIGYVKPDNWSPFMPFGMKGVILSAATVFFAYLGFDAVSNASEEVKNPQKNMPVGIISALAVCTVLYIAVSLVLTGMMPYAKLNVGDPVSFALKFVGQDAVAGIISVGAIIGITTVMLALLYAQVRLTFAMSRDGLLPGLFAKVHPSFKTPFRNTWLTGIVAAGIAGFINLGTLAHLVNMGTLAAFTVISIAVIVLRKKHPEIKASFRVPFVPVVPIISAGICLWFMYSLPGVTWLSFVIWIAVGTLVYFLYSRKHSLLNK</sequence>
<organism>
    <name type="scientific">Bacillus subtilis (strain 168)</name>
    <dbReference type="NCBI Taxonomy" id="224308"/>
    <lineage>
        <taxon>Bacteria</taxon>
        <taxon>Bacillati</taxon>
        <taxon>Bacillota</taxon>
        <taxon>Bacilli</taxon>
        <taxon>Bacillales</taxon>
        <taxon>Bacillaceae</taxon>
        <taxon>Bacillus</taxon>
    </lineage>
</organism>
<protein>
    <recommendedName>
        <fullName evidence="4">Methylthioribose transporter</fullName>
    </recommendedName>
</protein>
<reference key="1">
    <citation type="journal article" date="1997" name="Microbiology">
        <title>A 23.4 kb segment at the 69 degrees-70 degrees region of the Bacillus subtilis genome.</title>
        <authorList>
            <person name="Yamamoto H."/>
            <person name="Uchiyama S."/>
            <person name="Nugroho F.A."/>
            <person name="Sekiguchi J."/>
        </authorList>
    </citation>
    <scope>NUCLEOTIDE SEQUENCE [GENOMIC DNA]</scope>
    <source>
        <strain>168 / AC327</strain>
    </source>
</reference>
<reference key="2">
    <citation type="journal article" date="1997" name="Nature">
        <title>The complete genome sequence of the Gram-positive bacterium Bacillus subtilis.</title>
        <authorList>
            <person name="Kunst F."/>
            <person name="Ogasawara N."/>
            <person name="Moszer I."/>
            <person name="Albertini A.M."/>
            <person name="Alloni G."/>
            <person name="Azevedo V."/>
            <person name="Bertero M.G."/>
            <person name="Bessieres P."/>
            <person name="Bolotin A."/>
            <person name="Borchert S."/>
            <person name="Borriss R."/>
            <person name="Boursier L."/>
            <person name="Brans A."/>
            <person name="Braun M."/>
            <person name="Brignell S.C."/>
            <person name="Bron S."/>
            <person name="Brouillet S."/>
            <person name="Bruschi C.V."/>
            <person name="Caldwell B."/>
            <person name="Capuano V."/>
            <person name="Carter N.M."/>
            <person name="Choi S.-K."/>
            <person name="Codani J.-J."/>
            <person name="Connerton I.F."/>
            <person name="Cummings N.J."/>
            <person name="Daniel R.A."/>
            <person name="Denizot F."/>
            <person name="Devine K.M."/>
            <person name="Duesterhoeft A."/>
            <person name="Ehrlich S.D."/>
            <person name="Emmerson P.T."/>
            <person name="Entian K.-D."/>
            <person name="Errington J."/>
            <person name="Fabret C."/>
            <person name="Ferrari E."/>
            <person name="Foulger D."/>
            <person name="Fritz C."/>
            <person name="Fujita M."/>
            <person name="Fujita Y."/>
            <person name="Fuma S."/>
            <person name="Galizzi A."/>
            <person name="Galleron N."/>
            <person name="Ghim S.-Y."/>
            <person name="Glaser P."/>
            <person name="Goffeau A."/>
            <person name="Golightly E.J."/>
            <person name="Grandi G."/>
            <person name="Guiseppi G."/>
            <person name="Guy B.J."/>
            <person name="Haga K."/>
            <person name="Haiech J."/>
            <person name="Harwood C.R."/>
            <person name="Henaut A."/>
            <person name="Hilbert H."/>
            <person name="Holsappel S."/>
            <person name="Hosono S."/>
            <person name="Hullo M.-F."/>
            <person name="Itaya M."/>
            <person name="Jones L.-M."/>
            <person name="Joris B."/>
            <person name="Karamata D."/>
            <person name="Kasahara Y."/>
            <person name="Klaerr-Blanchard M."/>
            <person name="Klein C."/>
            <person name="Kobayashi Y."/>
            <person name="Koetter P."/>
            <person name="Koningstein G."/>
            <person name="Krogh S."/>
            <person name="Kumano M."/>
            <person name="Kurita K."/>
            <person name="Lapidus A."/>
            <person name="Lardinois S."/>
            <person name="Lauber J."/>
            <person name="Lazarevic V."/>
            <person name="Lee S.-M."/>
            <person name="Levine A."/>
            <person name="Liu H."/>
            <person name="Masuda S."/>
            <person name="Mauel C."/>
            <person name="Medigue C."/>
            <person name="Medina N."/>
            <person name="Mellado R.P."/>
            <person name="Mizuno M."/>
            <person name="Moestl D."/>
            <person name="Nakai S."/>
            <person name="Noback M."/>
            <person name="Noone D."/>
            <person name="O'Reilly M."/>
            <person name="Ogawa K."/>
            <person name="Ogiwara A."/>
            <person name="Oudega B."/>
            <person name="Park S.-H."/>
            <person name="Parro V."/>
            <person name="Pohl T.M."/>
            <person name="Portetelle D."/>
            <person name="Porwollik S."/>
            <person name="Prescott A.M."/>
            <person name="Presecan E."/>
            <person name="Pujic P."/>
            <person name="Purnelle B."/>
            <person name="Rapoport G."/>
            <person name="Rey M."/>
            <person name="Reynolds S."/>
            <person name="Rieger M."/>
            <person name="Rivolta C."/>
            <person name="Rocha E."/>
            <person name="Roche B."/>
            <person name="Rose M."/>
            <person name="Sadaie Y."/>
            <person name="Sato T."/>
            <person name="Scanlan E."/>
            <person name="Schleich S."/>
            <person name="Schroeter R."/>
            <person name="Scoffone F."/>
            <person name="Sekiguchi J."/>
            <person name="Sekowska A."/>
            <person name="Seror S.J."/>
            <person name="Serror P."/>
            <person name="Shin B.-S."/>
            <person name="Soldo B."/>
            <person name="Sorokin A."/>
            <person name="Tacconi E."/>
            <person name="Takagi T."/>
            <person name="Takahashi H."/>
            <person name="Takemaru K."/>
            <person name="Takeuchi M."/>
            <person name="Tamakoshi A."/>
            <person name="Tanaka T."/>
            <person name="Terpstra P."/>
            <person name="Tognoni A."/>
            <person name="Tosato V."/>
            <person name="Uchiyama S."/>
            <person name="Vandenbol M."/>
            <person name="Vannier F."/>
            <person name="Vassarotti A."/>
            <person name="Viari A."/>
            <person name="Wambutt R."/>
            <person name="Wedler E."/>
            <person name="Wedler H."/>
            <person name="Weitzenegger T."/>
            <person name="Winters P."/>
            <person name="Wipat A."/>
            <person name="Yamamoto H."/>
            <person name="Yamane K."/>
            <person name="Yasumoto K."/>
            <person name="Yata K."/>
            <person name="Yoshida K."/>
            <person name="Yoshikawa H.-F."/>
            <person name="Zumstein E."/>
            <person name="Yoshikawa H."/>
            <person name="Danchin A."/>
        </authorList>
    </citation>
    <scope>NUCLEOTIDE SEQUENCE [LARGE SCALE GENOMIC DNA]</scope>
    <source>
        <strain>168</strain>
    </source>
</reference>
<reference key="3">
    <citation type="journal article" date="2018" name="Microb. Biotechnol.">
        <title>Bacillus subtilis, the model Gram-positive bacterium: 20 years of annotation refinement.</title>
        <authorList>
            <person name="Borriss R."/>
            <person name="Danchin A."/>
            <person name="Harwood C.R."/>
            <person name="Medigue C."/>
            <person name="Rocha E.P.C."/>
            <person name="Sekowska A."/>
            <person name="Vallenet D."/>
        </authorList>
    </citation>
    <scope>FUNCTION</scope>
    <scope>DISRUPTION PHENOTYPE</scope>
</reference>
<feature type="chain" id="PRO_0000360829" description="Methylthioribose transporter">
    <location>
        <begin position="1"/>
        <end position="461"/>
    </location>
</feature>
<feature type="transmembrane region" description="Helical" evidence="1">
    <location>
        <begin position="33"/>
        <end position="53"/>
    </location>
</feature>
<feature type="transmembrane region" description="Helical" evidence="1">
    <location>
        <begin position="56"/>
        <end position="76"/>
    </location>
</feature>
<feature type="transmembrane region" description="Helical" evidence="1">
    <location>
        <begin position="102"/>
        <end position="122"/>
    </location>
</feature>
<feature type="transmembrane region" description="Helical" evidence="1">
    <location>
        <begin position="152"/>
        <end position="172"/>
    </location>
</feature>
<feature type="transmembrane region" description="Helical" evidence="1">
    <location>
        <begin position="185"/>
        <end position="205"/>
    </location>
</feature>
<feature type="transmembrane region" description="Helical" evidence="1">
    <location>
        <begin position="213"/>
        <end position="233"/>
    </location>
</feature>
<feature type="transmembrane region" description="Helical" evidence="1">
    <location>
        <begin position="254"/>
        <end position="274"/>
    </location>
</feature>
<feature type="transmembrane region" description="Helical" evidence="1">
    <location>
        <begin position="301"/>
        <end position="321"/>
    </location>
</feature>
<feature type="transmembrane region" description="Helical" evidence="1">
    <location>
        <begin position="355"/>
        <end position="375"/>
    </location>
</feature>
<feature type="transmembrane region" description="Helical" evidence="1">
    <location>
        <begin position="376"/>
        <end position="396"/>
    </location>
</feature>
<feature type="transmembrane region" description="Helical" evidence="1">
    <location>
        <begin position="409"/>
        <end position="429"/>
    </location>
</feature>
<feature type="transmembrane region" description="Helical" evidence="1">
    <location>
        <begin position="432"/>
        <end position="452"/>
    </location>
</feature>
<evidence type="ECO:0000255" key="1"/>
<evidence type="ECO:0000269" key="2">
    <source>
    </source>
</evidence>
<evidence type="ECO:0000303" key="3">
    <source>
    </source>
</evidence>
<evidence type="ECO:0000305" key="4"/>
<proteinExistence type="inferred from homology"/>
<dbReference type="EMBL" id="D86418">
    <property type="protein sequence ID" value="BAA20110.1"/>
    <property type="status" value="ALT_INIT"/>
    <property type="molecule type" value="Genomic_DNA"/>
</dbReference>
<dbReference type="EMBL" id="AL009126">
    <property type="protein sequence ID" value="CAB12553.1"/>
    <property type="molecule type" value="Genomic_DNA"/>
</dbReference>
<dbReference type="PIR" id="D69814">
    <property type="entry name" value="D69814"/>
</dbReference>
<dbReference type="RefSeq" id="NP_388615.1">
    <property type="nucleotide sequence ID" value="NC_000964.3"/>
</dbReference>
<dbReference type="RefSeq" id="WP_003242995.1">
    <property type="nucleotide sequence ID" value="NZ_OZ025638.1"/>
</dbReference>
<dbReference type="SMR" id="Q797A7"/>
<dbReference type="FunCoup" id="Q797A7">
    <property type="interactions" value="201"/>
</dbReference>
<dbReference type="STRING" id="224308.BSU07340"/>
<dbReference type="PaxDb" id="224308-BSU07340"/>
<dbReference type="EnsemblBacteria" id="CAB12553">
    <property type="protein sequence ID" value="CAB12553"/>
    <property type="gene ID" value="BSU_07340"/>
</dbReference>
<dbReference type="GeneID" id="936098"/>
<dbReference type="KEGG" id="bsu:BSU07340"/>
<dbReference type="PATRIC" id="fig|224308.179.peg.796"/>
<dbReference type="eggNOG" id="COG0531">
    <property type="taxonomic scope" value="Bacteria"/>
</dbReference>
<dbReference type="InParanoid" id="Q797A7"/>
<dbReference type="OrthoDB" id="9762947at2"/>
<dbReference type="PhylomeDB" id="Q797A7"/>
<dbReference type="BioCyc" id="BSUB:BSU07340-MONOMER"/>
<dbReference type="Proteomes" id="UP000001570">
    <property type="component" value="Chromosome"/>
</dbReference>
<dbReference type="GO" id="GO:0005886">
    <property type="term" value="C:plasma membrane"/>
    <property type="evidence" value="ECO:0007669"/>
    <property type="project" value="UniProtKB-SubCell"/>
</dbReference>
<dbReference type="GO" id="GO:0015171">
    <property type="term" value="F:amino acid transmembrane transporter activity"/>
    <property type="evidence" value="ECO:0000318"/>
    <property type="project" value="GO_Central"/>
</dbReference>
<dbReference type="GO" id="GO:0006865">
    <property type="term" value="P:amino acid transport"/>
    <property type="evidence" value="ECO:0000318"/>
    <property type="project" value="GO_Central"/>
</dbReference>
<dbReference type="Gene3D" id="1.20.1740.10">
    <property type="entry name" value="Amino acid/polyamine transporter I"/>
    <property type="match status" value="1"/>
</dbReference>
<dbReference type="InterPro" id="IPR002293">
    <property type="entry name" value="AA/rel_permease1"/>
</dbReference>
<dbReference type="PANTHER" id="PTHR43243:SF4">
    <property type="entry name" value="CATIONIC AMINO ACID TRANSPORTER 4"/>
    <property type="match status" value="1"/>
</dbReference>
<dbReference type="PANTHER" id="PTHR43243">
    <property type="entry name" value="INNER MEMBRANE TRANSPORTER YGJI-RELATED"/>
    <property type="match status" value="1"/>
</dbReference>
<dbReference type="Pfam" id="PF13520">
    <property type="entry name" value="AA_permease_2"/>
    <property type="match status" value="1"/>
</dbReference>
<dbReference type="PIRSF" id="PIRSF006060">
    <property type="entry name" value="AA_transporter"/>
    <property type="match status" value="1"/>
</dbReference>